<feature type="chain" id="PRO_0000298463" description="Cytochrome b6-f complex iron-sulfur subunit">
    <location>
        <begin position="1"/>
        <end position="178"/>
    </location>
</feature>
<feature type="transmembrane region" description="Helical" evidence="1">
    <location>
        <begin position="20"/>
        <end position="42"/>
    </location>
</feature>
<feature type="domain" description="Rieske" evidence="1">
    <location>
        <begin position="65"/>
        <end position="161"/>
    </location>
</feature>
<feature type="binding site" evidence="1">
    <location>
        <position position="107"/>
    </location>
    <ligand>
        <name>[2Fe-2S] cluster</name>
        <dbReference type="ChEBI" id="CHEBI:190135"/>
    </ligand>
</feature>
<feature type="binding site" evidence="1">
    <location>
        <position position="109"/>
    </location>
    <ligand>
        <name>[2Fe-2S] cluster</name>
        <dbReference type="ChEBI" id="CHEBI:190135"/>
    </ligand>
</feature>
<feature type="binding site" evidence="1">
    <location>
        <position position="125"/>
    </location>
    <ligand>
        <name>[2Fe-2S] cluster</name>
        <dbReference type="ChEBI" id="CHEBI:190135"/>
    </ligand>
</feature>
<feature type="binding site" evidence="1">
    <location>
        <position position="128"/>
    </location>
    <ligand>
        <name>[2Fe-2S] cluster</name>
        <dbReference type="ChEBI" id="CHEBI:190135"/>
    </ligand>
</feature>
<feature type="disulfide bond" evidence="1">
    <location>
        <begin position="112"/>
        <end position="127"/>
    </location>
</feature>
<sequence>MTQLSSSDVPGMGRRQFMNLLTFGSVTGVALGALYPVANYFIPPKAAGSGGGTSAKDELGNPITASGWLSSHPEGDRSLVQGLKGDPTYLIVEGEDAIGSYGINAICTHLGCVVPWNSGANKFMCPCHGSQYDSTGKVVRGPAPLSLALANVSVENDNVFVSQWTETDFRTGDKPWWA</sequence>
<reference key="1">
    <citation type="submission" date="2005-07" db="EMBL/GenBank/DDBJ databases">
        <title>Complete sequence of Synechococcus sp. CC9605.</title>
        <authorList>
            <consortium name="US DOE Joint Genome Institute"/>
            <person name="Copeland A."/>
            <person name="Lucas S."/>
            <person name="Lapidus A."/>
            <person name="Barry K."/>
            <person name="Detter J.C."/>
            <person name="Glavina T."/>
            <person name="Hammon N."/>
            <person name="Israni S."/>
            <person name="Pitluck S."/>
            <person name="Schmutz J."/>
            <person name="Martinez M."/>
            <person name="Larimer F."/>
            <person name="Land M."/>
            <person name="Kyrpides N."/>
            <person name="Ivanova N."/>
            <person name="Richardson P."/>
        </authorList>
    </citation>
    <scope>NUCLEOTIDE SEQUENCE [LARGE SCALE GENOMIC DNA]</scope>
    <source>
        <strain>CC9605</strain>
    </source>
</reference>
<name>UCRI_SYNSC</name>
<protein>
    <recommendedName>
        <fullName evidence="1">Cytochrome b6-f complex iron-sulfur subunit</fullName>
        <ecNumber evidence="1">7.1.1.6</ecNumber>
    </recommendedName>
    <alternativeName>
        <fullName evidence="1">Plastohydroquinone:plastocyanin oxidoreductase iron-sulfur protein</fullName>
        <shortName evidence="1">ISP</shortName>
        <shortName evidence="1">RISP</shortName>
    </alternativeName>
    <alternativeName>
        <fullName evidence="1">Rieske iron-sulfur protein</fullName>
    </alternativeName>
</protein>
<evidence type="ECO:0000255" key="1">
    <source>
        <dbReference type="HAMAP-Rule" id="MF_01335"/>
    </source>
</evidence>
<accession>Q3ALY0</accession>
<proteinExistence type="inferred from homology"/>
<gene>
    <name evidence="1" type="primary">petC</name>
    <name type="ordered locus">Syncc9605_0628</name>
</gene>
<dbReference type="EC" id="7.1.1.6" evidence="1"/>
<dbReference type="EMBL" id="CP000110">
    <property type="protein sequence ID" value="ABB34402.1"/>
    <property type="molecule type" value="Genomic_DNA"/>
</dbReference>
<dbReference type="RefSeq" id="WP_011363631.1">
    <property type="nucleotide sequence ID" value="NC_007516.1"/>
</dbReference>
<dbReference type="SMR" id="Q3ALY0"/>
<dbReference type="STRING" id="110662.Syncc9605_0628"/>
<dbReference type="KEGG" id="syd:Syncc9605_0628"/>
<dbReference type="eggNOG" id="COG0723">
    <property type="taxonomic scope" value="Bacteria"/>
</dbReference>
<dbReference type="HOGENOM" id="CLU_055690_8_0_3"/>
<dbReference type="OrthoDB" id="9767869at2"/>
<dbReference type="GO" id="GO:0031676">
    <property type="term" value="C:plasma membrane-derived thylakoid membrane"/>
    <property type="evidence" value="ECO:0007669"/>
    <property type="project" value="UniProtKB-SubCell"/>
</dbReference>
<dbReference type="GO" id="GO:0051537">
    <property type="term" value="F:2 iron, 2 sulfur cluster binding"/>
    <property type="evidence" value="ECO:0007669"/>
    <property type="project" value="UniProtKB-KW"/>
</dbReference>
<dbReference type="GO" id="GO:0045158">
    <property type="term" value="F:electron transporter, transferring electrons within cytochrome b6/f complex of photosystem II activity"/>
    <property type="evidence" value="ECO:0007669"/>
    <property type="project" value="UniProtKB-UniRule"/>
</dbReference>
<dbReference type="GO" id="GO:0046872">
    <property type="term" value="F:metal ion binding"/>
    <property type="evidence" value="ECO:0007669"/>
    <property type="project" value="UniProtKB-KW"/>
</dbReference>
<dbReference type="GO" id="GO:0004497">
    <property type="term" value="F:monooxygenase activity"/>
    <property type="evidence" value="ECO:0007669"/>
    <property type="project" value="UniProtKB-ARBA"/>
</dbReference>
<dbReference type="GO" id="GO:0016705">
    <property type="term" value="F:oxidoreductase activity, acting on paired donors, with incorporation or reduction of molecular oxygen"/>
    <property type="evidence" value="ECO:0007669"/>
    <property type="project" value="UniProtKB-ARBA"/>
</dbReference>
<dbReference type="GO" id="GO:0009496">
    <property type="term" value="F:plastoquinol--plastocyanin reductase activity"/>
    <property type="evidence" value="ECO:0007669"/>
    <property type="project" value="UniProtKB-UniRule"/>
</dbReference>
<dbReference type="GO" id="GO:0015979">
    <property type="term" value="P:photosynthesis"/>
    <property type="evidence" value="ECO:0007669"/>
    <property type="project" value="UniProtKB-UniRule"/>
</dbReference>
<dbReference type="CDD" id="cd03471">
    <property type="entry name" value="Rieske_cytochrome_b6f"/>
    <property type="match status" value="1"/>
</dbReference>
<dbReference type="FunFam" id="2.102.10.10:FF:000007">
    <property type="entry name" value="Cytochrome b6-f complex iron-sulfur subunit"/>
    <property type="match status" value="1"/>
</dbReference>
<dbReference type="Gene3D" id="2.102.10.10">
    <property type="entry name" value="Rieske [2Fe-2S] iron-sulphur domain"/>
    <property type="match status" value="1"/>
</dbReference>
<dbReference type="Gene3D" id="1.20.5.700">
    <property type="entry name" value="Single helix bin"/>
    <property type="match status" value="1"/>
</dbReference>
<dbReference type="HAMAP" id="MF_01335">
    <property type="entry name" value="Cytb6_f_Rieske"/>
    <property type="match status" value="1"/>
</dbReference>
<dbReference type="InterPro" id="IPR023960">
    <property type="entry name" value="Cyt_b6_f_Rieske"/>
</dbReference>
<dbReference type="InterPro" id="IPR017941">
    <property type="entry name" value="Rieske_2Fe-2S"/>
</dbReference>
<dbReference type="InterPro" id="IPR036922">
    <property type="entry name" value="Rieske_2Fe-2S_sf"/>
</dbReference>
<dbReference type="InterPro" id="IPR014349">
    <property type="entry name" value="Rieske_Fe-S_prot"/>
</dbReference>
<dbReference type="InterPro" id="IPR005805">
    <property type="entry name" value="Rieske_Fe-S_prot_C"/>
</dbReference>
<dbReference type="InterPro" id="IPR006311">
    <property type="entry name" value="TAT_signal"/>
</dbReference>
<dbReference type="NCBIfam" id="NF045928">
    <property type="entry name" value="Cytb6fFeSPetC"/>
    <property type="match status" value="1"/>
</dbReference>
<dbReference type="NCBIfam" id="NF010001">
    <property type="entry name" value="PRK13474.1"/>
    <property type="match status" value="1"/>
</dbReference>
<dbReference type="PANTHER" id="PTHR10134">
    <property type="entry name" value="CYTOCHROME B-C1 COMPLEX SUBUNIT RIESKE, MITOCHONDRIAL"/>
    <property type="match status" value="1"/>
</dbReference>
<dbReference type="Pfam" id="PF00355">
    <property type="entry name" value="Rieske"/>
    <property type="match status" value="1"/>
</dbReference>
<dbReference type="Pfam" id="PF25471">
    <property type="entry name" value="TM_PetC"/>
    <property type="match status" value="1"/>
</dbReference>
<dbReference type="PRINTS" id="PR00162">
    <property type="entry name" value="RIESKE"/>
</dbReference>
<dbReference type="SUPFAM" id="SSF50022">
    <property type="entry name" value="ISP domain"/>
    <property type="match status" value="1"/>
</dbReference>
<dbReference type="PROSITE" id="PS51296">
    <property type="entry name" value="RIESKE"/>
    <property type="match status" value="1"/>
</dbReference>
<dbReference type="PROSITE" id="PS51318">
    <property type="entry name" value="TAT"/>
    <property type="match status" value="1"/>
</dbReference>
<organism>
    <name type="scientific">Synechococcus sp. (strain CC9605)</name>
    <dbReference type="NCBI Taxonomy" id="110662"/>
    <lineage>
        <taxon>Bacteria</taxon>
        <taxon>Bacillati</taxon>
        <taxon>Cyanobacteriota</taxon>
        <taxon>Cyanophyceae</taxon>
        <taxon>Synechococcales</taxon>
        <taxon>Synechococcaceae</taxon>
        <taxon>Synechococcus</taxon>
    </lineage>
</organism>
<comment type="function">
    <text evidence="1">Component of the cytochrome b6-f complex, which mediates electron transfer between photosystem II (PSII) and photosystem I (PSI), cyclic electron flow around PSI, and state transitions.</text>
</comment>
<comment type="catalytic activity">
    <reaction evidence="1">
        <text>2 oxidized [plastocyanin] + a plastoquinol + 2 H(+)(in) = 2 reduced [plastocyanin] + a plastoquinone + 4 H(+)(out)</text>
        <dbReference type="Rhea" id="RHEA:22148"/>
        <dbReference type="Rhea" id="RHEA-COMP:9561"/>
        <dbReference type="Rhea" id="RHEA-COMP:9562"/>
        <dbReference type="Rhea" id="RHEA-COMP:10039"/>
        <dbReference type="Rhea" id="RHEA-COMP:10040"/>
        <dbReference type="ChEBI" id="CHEBI:15378"/>
        <dbReference type="ChEBI" id="CHEBI:17757"/>
        <dbReference type="ChEBI" id="CHEBI:29036"/>
        <dbReference type="ChEBI" id="CHEBI:49552"/>
        <dbReference type="ChEBI" id="CHEBI:62192"/>
        <dbReference type="EC" id="7.1.1.6"/>
    </reaction>
</comment>
<comment type="cofactor">
    <cofactor evidence="1">
        <name>[2Fe-2S] cluster</name>
        <dbReference type="ChEBI" id="CHEBI:190135"/>
    </cofactor>
    <text evidence="1">Binds 1 [2Fe-2S] cluster per subunit.</text>
</comment>
<comment type="subunit">
    <text evidence="1">The 4 large subunits of the cytochrome b6-f complex are cytochrome b6, subunit IV (17 kDa polypeptide, PetD), cytochrome f and the Rieske protein, while the 4 small subunits are PetG, PetL, PetM and PetN. The complex functions as a dimer.</text>
</comment>
<comment type="subcellular location">
    <subcellularLocation>
        <location evidence="1">Cellular thylakoid membrane</location>
        <topology evidence="1">Single-pass membrane protein</topology>
    </subcellularLocation>
    <text evidence="1">The transmembrane helix obliquely spans the membrane in one monomer, and its extrinsic C-terminal domain is part of the other monomer.</text>
</comment>
<comment type="miscellaneous">
    <text>The Rieske iron-sulfur protein is a high potential 2Fe-2S protein.</text>
</comment>
<comment type="similarity">
    <text evidence="1">Belongs to the Rieske iron-sulfur protein family.</text>
</comment>
<keyword id="KW-0001">2Fe-2S</keyword>
<keyword id="KW-1015">Disulfide bond</keyword>
<keyword id="KW-0249">Electron transport</keyword>
<keyword id="KW-0408">Iron</keyword>
<keyword id="KW-0411">Iron-sulfur</keyword>
<keyword id="KW-0472">Membrane</keyword>
<keyword id="KW-0479">Metal-binding</keyword>
<keyword id="KW-0793">Thylakoid</keyword>
<keyword id="KW-1278">Translocase</keyword>
<keyword id="KW-0812">Transmembrane</keyword>
<keyword id="KW-1133">Transmembrane helix</keyword>
<keyword id="KW-0813">Transport</keyword>